<evidence type="ECO:0000250" key="1"/>
<evidence type="ECO:0000269" key="2">
    <source>
    </source>
</evidence>
<evidence type="ECO:0000305" key="3"/>
<proteinExistence type="inferred from homology"/>
<feature type="chain" id="PRO_0000295037" description="DNA-directed RNA polymerase II subunit RPB2">
    <location>
        <begin position="1"/>
        <end position="1236"/>
    </location>
</feature>
<feature type="zinc finger region" description="C4-type">
    <location>
        <begin position="1172"/>
        <end position="1194"/>
    </location>
</feature>
<feature type="binding site" evidence="1">
    <location>
        <position position="846"/>
    </location>
    <ligand>
        <name>Mg(2+)</name>
        <dbReference type="ChEBI" id="CHEBI:18420"/>
        <note>ligand shared with RPB1</note>
    </ligand>
</feature>
<feature type="binding site" evidence="1">
    <location>
        <position position="1172"/>
    </location>
    <ligand>
        <name>Zn(2+)</name>
        <dbReference type="ChEBI" id="CHEBI:29105"/>
    </ligand>
</feature>
<feature type="binding site" evidence="1">
    <location>
        <position position="1175"/>
    </location>
    <ligand>
        <name>Zn(2+)</name>
        <dbReference type="ChEBI" id="CHEBI:29105"/>
    </ligand>
</feature>
<feature type="binding site" evidence="1">
    <location>
        <position position="1191"/>
    </location>
    <ligand>
        <name>Zn(2+)</name>
        <dbReference type="ChEBI" id="CHEBI:29105"/>
    </ligand>
</feature>
<feature type="binding site" evidence="1">
    <location>
        <position position="1194"/>
    </location>
    <ligand>
        <name>Zn(2+)</name>
        <dbReference type="ChEBI" id="CHEBI:29105"/>
    </ligand>
</feature>
<feature type="sequence variant" description="In strain: MmRL 1635." evidence="2">
    <original>D</original>
    <variation>A</variation>
    <location>
        <position position="401"/>
    </location>
</feature>
<feature type="sequence variant" description="In strain: MmRL 1759." evidence="2">
    <original>A</original>
    <variation>V</variation>
    <location>
        <position position="519"/>
    </location>
</feature>
<feature type="sequence variant" description="In strain: MmRL 1635 and MmRL 1759." evidence="2">
    <original>S</original>
    <variation>T</variation>
    <location>
        <position position="722"/>
    </location>
</feature>
<feature type="sequence variant" description="In strain: MmRL 1636." evidence="2">
    <original>E</original>
    <variation>K</variation>
    <location>
        <position position="727"/>
    </location>
</feature>
<feature type="sequence conflict" description="In Ref. 2; AAS67502." evidence="3" ref="2">
    <original>D</original>
    <variation>G</variation>
    <location>
        <position position="13"/>
    </location>
</feature>
<feature type="sequence conflict" description="In Ref. 2; AAS67502." evidence="3" ref="2">
    <original>F</original>
    <variation>L</variation>
    <location>
        <position position="1056"/>
    </location>
</feature>
<feature type="sequence conflict" description="In Ref. 2; AAS67502." evidence="3" ref="2">
    <original>I</original>
    <variation>V</variation>
    <location>
        <position position="1203"/>
    </location>
</feature>
<feature type="sequence conflict" description="In Ref. 2; AAS67502." evidence="3" ref="2">
    <original>L</original>
    <variation>S</variation>
    <location>
        <position position="1216"/>
    </location>
</feature>
<sequence length="1236" mass="140115">MSDQASDPYMYDDDSSSITPEDCWTVISSFFQEKGLVSQQLDSFDEFIESTIQELVWEDSRLILDQPAQHTSEEDHENRRYEITFGKIYISKPTQTEGDGTTHPMFPQEARLRNLTYSSPLYVDMTKRVLKSDDNAGNEHELEWIEEEIKDEEPSTKVYLGKVPIMLRSKFCMLRDLGEHEFYELKECPYDMGGYFVINGSEKVLIAQERSAANIVQVFKKAAPSPISHVAEIRSALERGSRLISSMQIKLYGREEKSTSNRTIKATLPYIKEDIPIVIVFRALGIVPDGDILEHICYDANDWQMLEMLKPCVEEGFVIQEREVALDFIGRRGALGIKREKRIQYAKDILQKELLPNITQDEGFETRKAFFLGYMVNRLLLCALERKEPDDRDHFGKKRLDLAGPLLASLFRILFKKLTKDIYNYMQRCVENDKVFNLTLAVKSQTITDGLRYSLATGNWGEQKKAMSSRAGVSQVLNRYTYSSTLSHLRRTNTPIGRDGKIAKPRQLHNTHWGLVCPAETPEGQACGLVKNLSLMSCISVGTPSEPILYFLEEWGMEPLEDYVPSNSPDSTRVFVNGVWVGTHREPAHLVDTMRSLRRRGDISPEVSIIRDIREKEFKIFTDAGRVYRPLFIVDDDPESETKGELKLQKEHIHKLLNAEYSEEYATNEFGEEEGPYGWSSLVNDGVVEYVDAEEEETIMIAMTPEDLEASKSSLTATQQKSLQLEEQELDPAKRIKPTNSSTTSTFTHCEIHPSMILGVAASIIPFPDHNQSPRNTYQSAMGKQAMGVFLTNYSVRMDTMANILYYPQKPLATTRAMEHLKFRELPAGQNAIVAIACYSGYNQEDSMIMNQSSIDRGLFRSLFFRTYMDLEKRQGMKALETFEKPSRSDTLRLKHGTYEKLDDDGLIAPGIRVSGEDIIIGKTTPIPPDTEELGQRTQYHTKRDASTPLRSTESGIVDQVLLTTNGDGAKFVKVRMRTTKVPQIGDKFASRHGQKGTVGVTYRHEDMPFTSQGIVPDLIINPHAIPSRMTVAHLIECLLSKVSSLSGLEGDASPFTDVTAEAVSKLLREHGYQSRGFEVMYHGHTGKKLMAQVFFGPTYYQRLRHMVDDKIHARARGPVQVLTRQPVEGRSRDGGLRFGEMERDCMIAHGAAGFLKERLMEASDAFRVHVCGVCGLMSVIANLKKNQFECRSCKNKTNIYQIHIPYAAKLLFQELMAMNISPRLYTERSGVSVRT</sequence>
<accession>A5DHT2</accession>
<accession>B3DFH1</accession>
<accession>Q6H184</accession>
<accession>Q6H185</accession>
<accession>Q6H190</accession>
<accession>Q6JEG3</accession>
<accession>Q6RYI5</accession>
<protein>
    <recommendedName>
        <fullName>DNA-directed RNA polymerase II subunit RPB2</fullName>
        <shortName>RNA polymerase II subunit 2</shortName>
        <shortName>RNA polymerase II subunit B2</shortName>
        <ecNumber>2.7.7.6</ecNumber>
    </recommendedName>
</protein>
<comment type="function">
    <text evidence="1">DNA-dependent RNA polymerase catalyzes the transcription of DNA into RNA using the four ribonucleoside triphosphates as substrates. Second largest component of RNA polymerase II which synthesizes mRNA precursors and many functional non-coding RNAs. Proposed to contribute to the polymerase catalytic activity and forms the polymerase active center together with the largest subunit. Pol II is the central component of the basal RNA polymerase II transcription machinery. It is composed of mobile elements that move relative to each other. RPB2 is part of the core element with the central large cleft, the clamp element that moves to open and close the cleft and the jaws that are thought to grab the incoming DNA template (By similarity).</text>
</comment>
<comment type="catalytic activity">
    <reaction>
        <text>RNA(n) + a ribonucleoside 5'-triphosphate = RNA(n+1) + diphosphate</text>
        <dbReference type="Rhea" id="RHEA:21248"/>
        <dbReference type="Rhea" id="RHEA-COMP:14527"/>
        <dbReference type="Rhea" id="RHEA-COMP:17342"/>
        <dbReference type="ChEBI" id="CHEBI:33019"/>
        <dbReference type="ChEBI" id="CHEBI:61557"/>
        <dbReference type="ChEBI" id="CHEBI:140395"/>
        <dbReference type="EC" id="2.7.7.6"/>
    </reaction>
</comment>
<comment type="subunit">
    <text evidence="1">Component of the RNA polymerase II (Pol II) complex consisting of 12 subunits.</text>
</comment>
<comment type="subcellular location">
    <subcellularLocation>
        <location evidence="1">Nucleus</location>
    </subcellularLocation>
</comment>
<comment type="miscellaneous">
    <text evidence="1">The binding of ribonucleoside triphosphate to the RNA polymerase II transcribing complex probably involves a two-step mechanism. The initial binding seems to occur at the entry (E) site and involves a magnesium ion coordinated by three conserved aspartate residues of the two largest RNA Pol II subunits (By similarity).</text>
</comment>
<comment type="similarity">
    <text evidence="3">Belongs to the RNA polymerase beta chain family.</text>
</comment>
<comment type="sequence caution" evidence="3">
    <conflict type="frameshift">
        <sequence resource="EMBL-CDS" id="ACE73644"/>
    </conflict>
</comment>
<comment type="sequence caution" evidence="3">
    <conflict type="erroneous initiation">
        <sequence resource="EMBL-CDS" id="EDK38735"/>
    </conflict>
</comment>
<gene>
    <name type="primary">RPB2</name>
    <name type="ORF">PGUG_02833</name>
</gene>
<dbReference type="EC" id="2.7.7.6"/>
<dbReference type="EMBL" id="CH408157">
    <property type="protein sequence ID" value="EDK38735.2"/>
    <property type="status" value="ALT_INIT"/>
    <property type="molecule type" value="Genomic_DNA"/>
</dbReference>
<dbReference type="EMBL" id="AY485613">
    <property type="protein sequence ID" value="AAS67502.2"/>
    <property type="molecule type" value="Genomic_DNA"/>
</dbReference>
<dbReference type="EMBL" id="AY497607">
    <property type="protein sequence ID" value="AAT47725.1"/>
    <property type="molecule type" value="Genomic_DNA"/>
</dbReference>
<dbReference type="EMBL" id="AY497627">
    <property type="protein sequence ID" value="AAT12543.1"/>
    <property type="molecule type" value="Genomic_DNA"/>
</dbReference>
<dbReference type="EMBL" id="AY497628">
    <property type="protein sequence ID" value="AAT47730.2"/>
    <property type="molecule type" value="Genomic_DNA"/>
</dbReference>
<dbReference type="EMBL" id="AY497628">
    <property type="protein sequence ID" value="ACE73644.1"/>
    <property type="status" value="ALT_FRAME"/>
    <property type="molecule type" value="Genomic_DNA"/>
</dbReference>
<dbReference type="EMBL" id="AY497629">
    <property type="protein sequence ID" value="AAT47731.1"/>
    <property type="molecule type" value="Genomic_DNA"/>
</dbReference>
<dbReference type="RefSeq" id="XP_001485104.1">
    <property type="nucleotide sequence ID" value="XM_001485054.1"/>
</dbReference>
<dbReference type="SMR" id="A5DHT2"/>
<dbReference type="FunCoup" id="A5DHT2">
    <property type="interactions" value="1275"/>
</dbReference>
<dbReference type="STRING" id="294746.A5DHT2"/>
<dbReference type="GeneID" id="5126869"/>
<dbReference type="KEGG" id="pgu:PGUG_02833"/>
<dbReference type="eggNOG" id="KOG0214">
    <property type="taxonomic scope" value="Eukaryota"/>
</dbReference>
<dbReference type="HOGENOM" id="CLU_000524_5_2_1"/>
<dbReference type="InParanoid" id="A5DHT2"/>
<dbReference type="OrthoDB" id="10248617at2759"/>
<dbReference type="Proteomes" id="UP000001997">
    <property type="component" value="Unassembled WGS sequence"/>
</dbReference>
<dbReference type="GO" id="GO:0000428">
    <property type="term" value="C:DNA-directed RNA polymerase complex"/>
    <property type="evidence" value="ECO:0007669"/>
    <property type="project" value="UniProtKB-KW"/>
</dbReference>
<dbReference type="GO" id="GO:0005739">
    <property type="term" value="C:mitochondrion"/>
    <property type="evidence" value="ECO:0007669"/>
    <property type="project" value="GOC"/>
</dbReference>
<dbReference type="GO" id="GO:0005634">
    <property type="term" value="C:nucleus"/>
    <property type="evidence" value="ECO:0007669"/>
    <property type="project" value="UniProtKB-SubCell"/>
</dbReference>
<dbReference type="GO" id="GO:0003677">
    <property type="term" value="F:DNA binding"/>
    <property type="evidence" value="ECO:0007669"/>
    <property type="project" value="InterPro"/>
</dbReference>
<dbReference type="GO" id="GO:0003899">
    <property type="term" value="F:DNA-directed RNA polymerase activity"/>
    <property type="evidence" value="ECO:0007669"/>
    <property type="project" value="UniProtKB-EC"/>
</dbReference>
<dbReference type="GO" id="GO:0032549">
    <property type="term" value="F:ribonucleoside binding"/>
    <property type="evidence" value="ECO:0007669"/>
    <property type="project" value="InterPro"/>
</dbReference>
<dbReference type="GO" id="GO:0008270">
    <property type="term" value="F:zinc ion binding"/>
    <property type="evidence" value="ECO:0007669"/>
    <property type="project" value="UniProtKB-KW"/>
</dbReference>
<dbReference type="GO" id="GO:0006351">
    <property type="term" value="P:DNA-templated transcription"/>
    <property type="evidence" value="ECO:0007669"/>
    <property type="project" value="InterPro"/>
</dbReference>
<dbReference type="CDD" id="cd00653">
    <property type="entry name" value="RNA_pol_B_RPB2"/>
    <property type="match status" value="1"/>
</dbReference>
<dbReference type="FunFam" id="2.40.50.150:FF:000002">
    <property type="entry name" value="DNA-directed RNA polymerase subunit beta"/>
    <property type="match status" value="1"/>
</dbReference>
<dbReference type="FunFam" id="3.90.1070.20:FF:000001">
    <property type="entry name" value="DNA-directed RNA polymerase subunit beta"/>
    <property type="match status" value="1"/>
</dbReference>
<dbReference type="FunFam" id="3.90.1100.10:FF:000005">
    <property type="entry name" value="DNA-directed RNA polymerase subunit beta"/>
    <property type="match status" value="1"/>
</dbReference>
<dbReference type="FunFam" id="3.90.1100.10:FF:000011">
    <property type="entry name" value="DNA-directed RNA polymerase subunit beta"/>
    <property type="match status" value="1"/>
</dbReference>
<dbReference type="FunFam" id="3.90.1110.10:FF:000003">
    <property type="entry name" value="DNA-directed RNA polymerase subunit beta"/>
    <property type="match status" value="1"/>
</dbReference>
<dbReference type="FunFam" id="3.90.1800.10:FF:000002">
    <property type="entry name" value="DNA-directed RNA polymerase subunit beta"/>
    <property type="match status" value="1"/>
</dbReference>
<dbReference type="Gene3D" id="2.40.50.150">
    <property type="match status" value="1"/>
</dbReference>
<dbReference type="Gene3D" id="3.90.1070.20">
    <property type="match status" value="1"/>
</dbReference>
<dbReference type="Gene3D" id="2.40.270.10">
    <property type="entry name" value="DNA-directed RNA polymerase, subunit 2, domain 6"/>
    <property type="match status" value="1"/>
</dbReference>
<dbReference type="Gene3D" id="3.90.1800.10">
    <property type="entry name" value="RNA polymerase alpha subunit dimerisation domain"/>
    <property type="match status" value="1"/>
</dbReference>
<dbReference type="Gene3D" id="3.90.1110.10">
    <property type="entry name" value="RNA polymerase Rpb2, domain 2"/>
    <property type="match status" value="1"/>
</dbReference>
<dbReference type="InterPro" id="IPR015712">
    <property type="entry name" value="DNA-dir_RNA_pol_su2"/>
</dbReference>
<dbReference type="InterPro" id="IPR007120">
    <property type="entry name" value="DNA-dir_RNAP_su2_dom"/>
</dbReference>
<dbReference type="InterPro" id="IPR037033">
    <property type="entry name" value="DNA-dir_RNAP_su2_hyb_sf"/>
</dbReference>
<dbReference type="InterPro" id="IPR007121">
    <property type="entry name" value="RNA_pol_bsu_CS"/>
</dbReference>
<dbReference type="InterPro" id="IPR007644">
    <property type="entry name" value="RNA_pol_bsu_protrusion"/>
</dbReference>
<dbReference type="InterPro" id="IPR007642">
    <property type="entry name" value="RNA_pol_Rpb2_2"/>
</dbReference>
<dbReference type="InterPro" id="IPR037034">
    <property type="entry name" value="RNA_pol_Rpb2_2_sf"/>
</dbReference>
<dbReference type="InterPro" id="IPR007645">
    <property type="entry name" value="RNA_pol_Rpb2_3"/>
</dbReference>
<dbReference type="InterPro" id="IPR007646">
    <property type="entry name" value="RNA_pol_Rpb2_4"/>
</dbReference>
<dbReference type="InterPro" id="IPR007647">
    <property type="entry name" value="RNA_pol_Rpb2_5"/>
</dbReference>
<dbReference type="InterPro" id="IPR007641">
    <property type="entry name" value="RNA_pol_Rpb2_7"/>
</dbReference>
<dbReference type="InterPro" id="IPR014724">
    <property type="entry name" value="RNA_pol_RPB2_OB-fold"/>
</dbReference>
<dbReference type="NCBIfam" id="NF007175">
    <property type="entry name" value="PRK09606.1"/>
    <property type="match status" value="1"/>
</dbReference>
<dbReference type="PANTHER" id="PTHR20856">
    <property type="entry name" value="DNA-DIRECTED RNA POLYMERASE I SUBUNIT 2"/>
    <property type="match status" value="1"/>
</dbReference>
<dbReference type="Pfam" id="PF04563">
    <property type="entry name" value="RNA_pol_Rpb2_1"/>
    <property type="match status" value="1"/>
</dbReference>
<dbReference type="Pfam" id="PF04561">
    <property type="entry name" value="RNA_pol_Rpb2_2"/>
    <property type="match status" value="1"/>
</dbReference>
<dbReference type="Pfam" id="PF04565">
    <property type="entry name" value="RNA_pol_Rpb2_3"/>
    <property type="match status" value="1"/>
</dbReference>
<dbReference type="Pfam" id="PF04566">
    <property type="entry name" value="RNA_pol_Rpb2_4"/>
    <property type="match status" value="1"/>
</dbReference>
<dbReference type="Pfam" id="PF04567">
    <property type="entry name" value="RNA_pol_Rpb2_5"/>
    <property type="match status" value="1"/>
</dbReference>
<dbReference type="Pfam" id="PF00562">
    <property type="entry name" value="RNA_pol_Rpb2_6"/>
    <property type="match status" value="1"/>
</dbReference>
<dbReference type="Pfam" id="PF04560">
    <property type="entry name" value="RNA_pol_Rpb2_7"/>
    <property type="match status" value="1"/>
</dbReference>
<dbReference type="SUPFAM" id="SSF64484">
    <property type="entry name" value="beta and beta-prime subunits of DNA dependent RNA-polymerase"/>
    <property type="match status" value="1"/>
</dbReference>
<dbReference type="PROSITE" id="PS01166">
    <property type="entry name" value="RNA_POL_BETA"/>
    <property type="match status" value="1"/>
</dbReference>
<name>RPB2_PICGU</name>
<keyword id="KW-0240">DNA-directed RNA polymerase</keyword>
<keyword id="KW-0460">Magnesium</keyword>
<keyword id="KW-0479">Metal-binding</keyword>
<keyword id="KW-0548">Nucleotidyltransferase</keyword>
<keyword id="KW-0539">Nucleus</keyword>
<keyword id="KW-1185">Reference proteome</keyword>
<keyword id="KW-0804">Transcription</keyword>
<keyword id="KW-0808">Transferase</keyword>
<keyword id="KW-0862">Zinc</keyword>
<keyword id="KW-0863">Zinc-finger</keyword>
<organism>
    <name type="scientific">Meyerozyma guilliermondii (strain ATCC 6260 / CBS 566 / DSM 6381 / JCM 1539 / NBRC 10279 / NRRL Y-324)</name>
    <name type="common">Yeast</name>
    <name type="synonym">Candida guilliermondii</name>
    <dbReference type="NCBI Taxonomy" id="294746"/>
    <lineage>
        <taxon>Eukaryota</taxon>
        <taxon>Fungi</taxon>
        <taxon>Dikarya</taxon>
        <taxon>Ascomycota</taxon>
        <taxon>Saccharomycotina</taxon>
        <taxon>Pichiomycetes</taxon>
        <taxon>Debaryomycetaceae</taxon>
        <taxon>Meyerozyma</taxon>
    </lineage>
</organism>
<reference key="1">
    <citation type="journal article" date="2009" name="Nature">
        <title>Evolution of pathogenicity and sexual reproduction in eight Candida genomes.</title>
        <authorList>
            <person name="Butler G."/>
            <person name="Rasmussen M.D."/>
            <person name="Lin M.F."/>
            <person name="Santos M.A.S."/>
            <person name="Sakthikumar S."/>
            <person name="Munro C.A."/>
            <person name="Rheinbay E."/>
            <person name="Grabherr M."/>
            <person name="Forche A."/>
            <person name="Reedy J.L."/>
            <person name="Agrafioti I."/>
            <person name="Arnaud M.B."/>
            <person name="Bates S."/>
            <person name="Brown A.J.P."/>
            <person name="Brunke S."/>
            <person name="Costanzo M.C."/>
            <person name="Fitzpatrick D.A."/>
            <person name="de Groot P.W.J."/>
            <person name="Harris D."/>
            <person name="Hoyer L.L."/>
            <person name="Hube B."/>
            <person name="Klis F.M."/>
            <person name="Kodira C."/>
            <person name="Lennard N."/>
            <person name="Logue M.E."/>
            <person name="Martin R."/>
            <person name="Neiman A.M."/>
            <person name="Nikolaou E."/>
            <person name="Quail M.A."/>
            <person name="Quinn J."/>
            <person name="Santos M.C."/>
            <person name="Schmitzberger F.F."/>
            <person name="Sherlock G."/>
            <person name="Shah P."/>
            <person name="Silverstein K.A.T."/>
            <person name="Skrzypek M.S."/>
            <person name="Soll D."/>
            <person name="Staggs R."/>
            <person name="Stansfield I."/>
            <person name="Stumpf M.P.H."/>
            <person name="Sudbery P.E."/>
            <person name="Srikantha T."/>
            <person name="Zeng Q."/>
            <person name="Berman J."/>
            <person name="Berriman M."/>
            <person name="Heitman J."/>
            <person name="Gow N.A.R."/>
            <person name="Lorenz M.C."/>
            <person name="Birren B.W."/>
            <person name="Kellis M."/>
            <person name="Cuomo C.A."/>
        </authorList>
    </citation>
    <scope>NUCLEOTIDE SEQUENCE [LARGE SCALE GENOMIC DNA]</scope>
    <source>
        <strain>ATCC 6260 / CBS 566 / DSM 6381 / JCM 1539 / NBRC 10279 / NRRL Y-324</strain>
    </source>
</reference>
<reference key="2">
    <citation type="journal article" date="2004" name="Proc. Natl. Acad. Sci. U.S.A.">
        <title>Body plan evolution of ascomycetes, as inferred from an RNA polymerase II phylogeny.</title>
        <authorList>
            <person name="Liu Y.J."/>
            <person name="Hall B.D."/>
        </authorList>
    </citation>
    <scope>NUCLEOTIDE SEQUENCE [GENOMIC DNA] OF 1-1219</scope>
</reference>
<reference key="3">
    <citation type="journal article" date="2004" name="J. Clin. Microbiol.">
        <title>Phylogeny and evolution of medical species of Candida and related taxa: a multigenic analysis.</title>
        <authorList>
            <person name="Diezmann S."/>
            <person name="Cox C.J."/>
            <person name="Schoenian G."/>
            <person name="Vilgalys R.J."/>
            <person name="Mitchell T.G."/>
        </authorList>
    </citation>
    <scope>NUCLEOTIDE SEQUENCE [GENOMIC DNA] OF 398-766</scope>
    <scope>VARIANTS ALA-401; VAL-519; THR-722 AND LYS-727</scope>
    <source>
        <strain>ATCC 46036 / CBS 2030 / IFO 10106 / NRRL Y-2075</strain>
        <strain>MMRL 1635</strain>
        <strain>MMRL 1636</strain>
        <strain>MMRL 1759</strain>
    </source>
</reference>